<gene>
    <name type="primary">NOP9</name>
    <name type="ordered locus">YALI0D11242g</name>
</gene>
<reference key="1">
    <citation type="journal article" date="2004" name="Nature">
        <title>Genome evolution in yeasts.</title>
        <authorList>
            <person name="Dujon B."/>
            <person name="Sherman D."/>
            <person name="Fischer G."/>
            <person name="Durrens P."/>
            <person name="Casaregola S."/>
            <person name="Lafontaine I."/>
            <person name="de Montigny J."/>
            <person name="Marck C."/>
            <person name="Neuveglise C."/>
            <person name="Talla E."/>
            <person name="Goffard N."/>
            <person name="Frangeul L."/>
            <person name="Aigle M."/>
            <person name="Anthouard V."/>
            <person name="Babour A."/>
            <person name="Barbe V."/>
            <person name="Barnay S."/>
            <person name="Blanchin S."/>
            <person name="Beckerich J.-M."/>
            <person name="Beyne E."/>
            <person name="Bleykasten C."/>
            <person name="Boisrame A."/>
            <person name="Boyer J."/>
            <person name="Cattolico L."/>
            <person name="Confanioleri F."/>
            <person name="de Daruvar A."/>
            <person name="Despons L."/>
            <person name="Fabre E."/>
            <person name="Fairhead C."/>
            <person name="Ferry-Dumazet H."/>
            <person name="Groppi A."/>
            <person name="Hantraye F."/>
            <person name="Hennequin C."/>
            <person name="Jauniaux N."/>
            <person name="Joyet P."/>
            <person name="Kachouri R."/>
            <person name="Kerrest A."/>
            <person name="Koszul R."/>
            <person name="Lemaire M."/>
            <person name="Lesur I."/>
            <person name="Ma L."/>
            <person name="Muller H."/>
            <person name="Nicaud J.-M."/>
            <person name="Nikolski M."/>
            <person name="Oztas S."/>
            <person name="Ozier-Kalogeropoulos O."/>
            <person name="Pellenz S."/>
            <person name="Potier S."/>
            <person name="Richard G.-F."/>
            <person name="Straub M.-L."/>
            <person name="Suleau A."/>
            <person name="Swennen D."/>
            <person name="Tekaia F."/>
            <person name="Wesolowski-Louvel M."/>
            <person name="Westhof E."/>
            <person name="Wirth B."/>
            <person name="Zeniou-Meyer M."/>
            <person name="Zivanovic Y."/>
            <person name="Bolotin-Fukuhara M."/>
            <person name="Thierry A."/>
            <person name="Bouchier C."/>
            <person name="Caudron B."/>
            <person name="Scarpelli C."/>
            <person name="Gaillardin C."/>
            <person name="Weissenbach J."/>
            <person name="Wincker P."/>
            <person name="Souciet J.-L."/>
        </authorList>
    </citation>
    <scope>NUCLEOTIDE SEQUENCE [LARGE SCALE GENOMIC DNA]</scope>
    <source>
        <strain>CLIB 122 / E 150</strain>
    </source>
</reference>
<proteinExistence type="inferred from homology"/>
<organism>
    <name type="scientific">Yarrowia lipolytica (strain CLIB 122 / E 150)</name>
    <name type="common">Yeast</name>
    <name type="synonym">Candida lipolytica</name>
    <dbReference type="NCBI Taxonomy" id="284591"/>
    <lineage>
        <taxon>Eukaryota</taxon>
        <taxon>Fungi</taxon>
        <taxon>Dikarya</taxon>
        <taxon>Ascomycota</taxon>
        <taxon>Saccharomycotina</taxon>
        <taxon>Dipodascomycetes</taxon>
        <taxon>Dipodascales</taxon>
        <taxon>Dipodascales incertae sedis</taxon>
        <taxon>Yarrowia</taxon>
    </lineage>
</organism>
<feature type="chain" id="PRO_0000407837" description="Nucleolar protein 9">
    <location>
        <begin position="1"/>
        <end position="724"/>
    </location>
</feature>
<feature type="repeat" description="Pumilio 1">
    <location>
        <begin position="147"/>
        <end position="183"/>
    </location>
</feature>
<feature type="repeat" description="Pumilio 2">
    <location>
        <begin position="204"/>
        <end position="239"/>
    </location>
</feature>
<feature type="repeat" description="Pumilio 3">
    <location>
        <begin position="291"/>
        <end position="328"/>
    </location>
</feature>
<feature type="repeat" description="Pumilio 4">
    <location>
        <begin position="340"/>
        <end position="375"/>
    </location>
</feature>
<feature type="repeat" description="Pumilio 5">
    <location>
        <begin position="376"/>
        <end position="412"/>
    </location>
</feature>
<feature type="repeat" description="Pumilio 6">
    <location>
        <begin position="513"/>
        <end position="549"/>
    </location>
</feature>
<feature type="repeat" description="Pumilio 7">
    <location>
        <begin position="550"/>
        <end position="587"/>
    </location>
</feature>
<feature type="region of interest" description="Disordered" evidence="2">
    <location>
        <begin position="1"/>
        <end position="23"/>
    </location>
</feature>
<feature type="region of interest" description="Disordered" evidence="2">
    <location>
        <begin position="39"/>
        <end position="61"/>
    </location>
</feature>
<feature type="region of interest" description="Disordered" evidence="2">
    <location>
        <begin position="235"/>
        <end position="258"/>
    </location>
</feature>
<feature type="region of interest" description="Disordered" evidence="2">
    <location>
        <begin position="649"/>
        <end position="724"/>
    </location>
</feature>
<feature type="compositionally biased region" description="Basic residues" evidence="2">
    <location>
        <begin position="1"/>
        <end position="14"/>
    </location>
</feature>
<feature type="compositionally biased region" description="Polar residues" evidence="2">
    <location>
        <begin position="235"/>
        <end position="247"/>
    </location>
</feature>
<feature type="compositionally biased region" description="Gly residues" evidence="2">
    <location>
        <begin position="665"/>
        <end position="698"/>
    </location>
</feature>
<name>NOP9_YARLI</name>
<accession>Q6C9H2</accession>
<evidence type="ECO:0000250" key="1"/>
<evidence type="ECO:0000256" key="2">
    <source>
        <dbReference type="SAM" id="MobiDB-lite"/>
    </source>
</evidence>
<evidence type="ECO:0000305" key="3"/>
<comment type="function">
    <text evidence="1">RNA-binding nucleolar protein required for pre-rRNA processing. Involved in production of 18S rRNA and assembly of small ribosomal subunit (By similarity).</text>
</comment>
<comment type="subcellular location">
    <subcellularLocation>
        <location evidence="1">Nucleus</location>
        <location evidence="1">Nucleolus</location>
    </subcellularLocation>
</comment>
<comment type="similarity">
    <text evidence="3">Belongs to the NOP9 family.</text>
</comment>
<sequence length="724" mass="80991">MPREVKKRGRRAAAKRAEEEKEDVDLKVYENDEDYVTFDADGGVAGGHDDEENDGYDNETPYNPLDLKQMPFFGFLDDQESEYFKTAESTLAVDAFGSPEEKLGFISGLLDEARGKELKLVTNQICSKLMERLILLANDEQIRALFEVFSGYFVDLSRHKYSSHCVETLLVRGAAIVEKEVLDPNFDGDSEDSMEKRFLTLANDMKDYIQDLISNPYASHVIRVLLLILGGQTLPSPTSSEGNSSVLRSKKSRTARRNIDIKDSEENDRAYQIPGAFHDALEAIVSGFSKRLKPTAARELAIGQVSSPVVQLLIDSEATTSEQRPLLNTIFADTEDRDSSEEAFVEHLLSDAVGSHFLQNVLQKAPEAFVERLYRLYMSQRVQKLVRRDYAGFVIETCMQRLPEADVHHIIDTAMGEIPYLVENNNLTMVRILLTRAAAANYKATDVANAVLKTFDTDSTDPKLLQKVLQLDEKNPYKPHEASSPGLHRCLVLQQLVEASPEVLATAFVGLNSGDVDVIKMAKHQSYSRLLEKCLRPSINTIERRKFLNKINGQCVDLARDPFASHVMDRLWNFTYKMNNFREKIANELVADEDLKENTYGKAVWRNWSLDKFLRRKSDWWVTLHATDDALAKEYEELGIPLDAKSLANPGQKRFGRGGARIITRGGGTFPRGGGRGRGGFRGGRGGAPRGGFGGSDRGGFKRANGGDGEDASGDRSRKKVRNE</sequence>
<keyword id="KW-0539">Nucleus</keyword>
<keyword id="KW-1185">Reference proteome</keyword>
<keyword id="KW-0677">Repeat</keyword>
<keyword id="KW-0690">Ribosome biogenesis</keyword>
<keyword id="KW-0698">rRNA processing</keyword>
<protein>
    <recommendedName>
        <fullName>Nucleolar protein 9</fullName>
    </recommendedName>
    <alternativeName>
        <fullName>Pumilio domain-containing protein NOP9</fullName>
    </alternativeName>
</protein>
<dbReference type="EMBL" id="CR382130">
    <property type="protein sequence ID" value="CAG80878.1"/>
    <property type="molecule type" value="Genomic_DNA"/>
</dbReference>
<dbReference type="RefSeq" id="XP_502690.1">
    <property type="nucleotide sequence ID" value="XM_502690.1"/>
</dbReference>
<dbReference type="SMR" id="Q6C9H2"/>
<dbReference type="FunCoup" id="Q6C9H2">
    <property type="interactions" value="932"/>
</dbReference>
<dbReference type="STRING" id="284591.Q6C9H2"/>
<dbReference type="EnsemblFungi" id="CAG80878">
    <property type="protein sequence ID" value="CAG80878"/>
    <property type="gene ID" value="YALI0_D11242g"/>
</dbReference>
<dbReference type="KEGG" id="yli:2910732"/>
<dbReference type="VEuPathDB" id="FungiDB:YALI0_D11242g"/>
<dbReference type="HOGENOM" id="CLU_008720_1_1_1"/>
<dbReference type="InParanoid" id="Q6C9H2"/>
<dbReference type="OMA" id="CNSYGSH"/>
<dbReference type="OrthoDB" id="83711at4891"/>
<dbReference type="Proteomes" id="UP000001300">
    <property type="component" value="Chromosome D"/>
</dbReference>
<dbReference type="GO" id="GO:0030686">
    <property type="term" value="C:90S preribosome"/>
    <property type="evidence" value="ECO:0000318"/>
    <property type="project" value="GO_Central"/>
</dbReference>
<dbReference type="GO" id="GO:0005730">
    <property type="term" value="C:nucleolus"/>
    <property type="evidence" value="ECO:0000318"/>
    <property type="project" value="GO_Central"/>
</dbReference>
<dbReference type="GO" id="GO:0030688">
    <property type="term" value="C:preribosome, small subunit precursor"/>
    <property type="evidence" value="ECO:0000318"/>
    <property type="project" value="GO_Central"/>
</dbReference>
<dbReference type="GO" id="GO:0032040">
    <property type="term" value="C:small-subunit processome"/>
    <property type="evidence" value="ECO:0007669"/>
    <property type="project" value="EnsemblFungi"/>
</dbReference>
<dbReference type="GO" id="GO:0003723">
    <property type="term" value="F:RNA binding"/>
    <property type="evidence" value="ECO:0000318"/>
    <property type="project" value="GO_Central"/>
</dbReference>
<dbReference type="GO" id="GO:0000480">
    <property type="term" value="P:endonucleolytic cleavage in 5'-ETS of tricistronic rRNA transcript (SSU-rRNA, 5.8S rRNA, LSU-rRNA)"/>
    <property type="evidence" value="ECO:0000318"/>
    <property type="project" value="GO_Central"/>
</dbReference>
<dbReference type="GO" id="GO:0000447">
    <property type="term" value="P:endonucleolytic cleavage in ITS1 to separate SSU-rRNA from 5.8S rRNA and LSU-rRNA from tricistronic rRNA transcript (SSU-rRNA, 5.8S rRNA, LSU-rRNA)"/>
    <property type="evidence" value="ECO:0000318"/>
    <property type="project" value="GO_Central"/>
</dbReference>
<dbReference type="GO" id="GO:0000472">
    <property type="term" value="P:endonucleolytic cleavage to generate mature 5'-end of SSU-rRNA from (SSU-rRNA, 5.8S rRNA, LSU-rRNA)"/>
    <property type="evidence" value="ECO:0000318"/>
    <property type="project" value="GO_Central"/>
</dbReference>
<dbReference type="GO" id="GO:0000056">
    <property type="term" value="P:ribosomal small subunit export from nucleus"/>
    <property type="evidence" value="ECO:0000318"/>
    <property type="project" value="GO_Central"/>
</dbReference>
<dbReference type="Gene3D" id="1.25.10.10">
    <property type="entry name" value="Leucine-rich Repeat Variant"/>
    <property type="match status" value="3"/>
</dbReference>
<dbReference type="InterPro" id="IPR011989">
    <property type="entry name" value="ARM-like"/>
</dbReference>
<dbReference type="InterPro" id="IPR016024">
    <property type="entry name" value="ARM-type_fold"/>
</dbReference>
<dbReference type="InterPro" id="IPR040000">
    <property type="entry name" value="NOP9"/>
</dbReference>
<dbReference type="InterPro" id="IPR001313">
    <property type="entry name" value="Pumilio_RNA-bd_rpt"/>
</dbReference>
<dbReference type="PANTHER" id="PTHR13102">
    <property type="entry name" value="NUCLEOLAR PROTEIN 9"/>
    <property type="match status" value="1"/>
</dbReference>
<dbReference type="PANTHER" id="PTHR13102:SF0">
    <property type="entry name" value="NUCLEOLAR PROTEIN 9"/>
    <property type="match status" value="1"/>
</dbReference>
<dbReference type="Pfam" id="PF22493">
    <property type="entry name" value="PUF_NOP9"/>
    <property type="match status" value="1"/>
</dbReference>
<dbReference type="SMART" id="SM00025">
    <property type="entry name" value="Pumilio"/>
    <property type="match status" value="7"/>
</dbReference>
<dbReference type="SUPFAM" id="SSF48371">
    <property type="entry name" value="ARM repeat"/>
    <property type="match status" value="1"/>
</dbReference>